<comment type="function">
    <text evidence="1 2">Catalyzes the condensation of 4-hydroxybenzoate (HB) with 5-phospho-alpha-D-ribose 1-diphosphate (PRPP) to produce beta-ribofuranosylphenol 5'-phosphate (beta-RFH-P) (By similarity). Also catalyzes the condensation of 4-aminobenzoate (pABA) with PRPP to produce beta-ribofuranosylaminobenzene 5'-phosphate (beta-RFA-P) (PubMed:12142414).</text>
</comment>
<comment type="catalytic activity">
    <reaction evidence="1">
        <text>5-phospho-alpha-D-ribose 1-diphosphate + 4-hydroxybenzoate + H(+) = 4-(beta-D-ribofuranosyl)phenol 5'-phosphate + CO2 + diphosphate</text>
        <dbReference type="Rhea" id="RHEA:48556"/>
        <dbReference type="ChEBI" id="CHEBI:15378"/>
        <dbReference type="ChEBI" id="CHEBI:16526"/>
        <dbReference type="ChEBI" id="CHEBI:17879"/>
        <dbReference type="ChEBI" id="CHEBI:33019"/>
        <dbReference type="ChEBI" id="CHEBI:58017"/>
        <dbReference type="ChEBI" id="CHEBI:82767"/>
        <dbReference type="EC" id="2.4.2.54"/>
    </reaction>
    <physiologicalReaction direction="left-to-right" evidence="1">
        <dbReference type="Rhea" id="RHEA:48557"/>
    </physiologicalReaction>
</comment>
<comment type="catalytic activity">
    <reaction evidence="2">
        <text>4-aminobenzoate + 5-phospho-alpha-D-ribose 1-diphosphate + H(+) = 4-(beta-D-ribofuranosyl)aminobenzene 5'-phosphate + CO2 + diphosphate</text>
        <dbReference type="Rhea" id="RHEA:35815"/>
        <dbReference type="ChEBI" id="CHEBI:15378"/>
        <dbReference type="ChEBI" id="CHEBI:16526"/>
        <dbReference type="ChEBI" id="CHEBI:17836"/>
        <dbReference type="ChEBI" id="CHEBI:33019"/>
        <dbReference type="ChEBI" id="CHEBI:58017"/>
        <dbReference type="ChEBI" id="CHEBI:72778"/>
    </reaction>
    <physiologicalReaction direction="left-to-right" evidence="2">
        <dbReference type="Rhea" id="RHEA:35816"/>
    </physiologicalReaction>
</comment>
<comment type="biophysicochemical properties">
    <phDependence>
        <text evidence="2">Optimum pH is 5.3.</text>
    </phDependence>
    <temperatureDependence>
        <text evidence="2">Optimum temperature is 70 degrees Celsius.</text>
    </temperatureDependence>
</comment>
<comment type="pathway">
    <text evidence="5">Cofactor biosynthesis; 5,6,7,8-tetrahydromethanopterin biosynthesis.</text>
</comment>
<comment type="subunit">
    <text evidence="2">Homodimer.</text>
</comment>
<comment type="similarity">
    <text evidence="4">Belongs to the beta-RFA-P synthase family.</text>
</comment>
<organism>
    <name type="scientific">Archaeoglobus fulgidus (strain ATCC 49558 / DSM 4304 / JCM 9628 / NBRC 100126 / VC-16)</name>
    <dbReference type="NCBI Taxonomy" id="224325"/>
    <lineage>
        <taxon>Archaea</taxon>
        <taxon>Methanobacteriati</taxon>
        <taxon>Methanobacteriota</taxon>
        <taxon>Archaeoglobi</taxon>
        <taxon>Archaeoglobales</taxon>
        <taxon>Archaeoglobaceae</taxon>
        <taxon>Archaeoglobus</taxon>
    </lineage>
</organism>
<dbReference type="EC" id="2.4.2.54" evidence="1"/>
<dbReference type="EMBL" id="AE000782">
    <property type="protein sequence ID" value="AAB89167.1"/>
    <property type="molecule type" value="Genomic_DNA"/>
</dbReference>
<dbReference type="PIR" id="H69510">
    <property type="entry name" value="H69510"/>
</dbReference>
<dbReference type="RefSeq" id="WP_010879581.1">
    <property type="nucleotide sequence ID" value="NC_000917.1"/>
</dbReference>
<dbReference type="SMR" id="O28190"/>
<dbReference type="STRING" id="224325.AF_2089"/>
<dbReference type="PaxDb" id="224325-AF_2089"/>
<dbReference type="EnsemblBacteria" id="AAB89167">
    <property type="protein sequence ID" value="AAB89167"/>
    <property type="gene ID" value="AF_2089"/>
</dbReference>
<dbReference type="KEGG" id="afu:AF_2089"/>
<dbReference type="eggNOG" id="arCOG01026">
    <property type="taxonomic scope" value="Archaea"/>
</dbReference>
<dbReference type="HOGENOM" id="CLU_061764_0_0_2"/>
<dbReference type="OrthoDB" id="85156at2157"/>
<dbReference type="PhylomeDB" id="O28190"/>
<dbReference type="BRENDA" id="2.4.2.54">
    <property type="organism ID" value="414"/>
</dbReference>
<dbReference type="UniPathway" id="UPA00065"/>
<dbReference type="Proteomes" id="UP000002199">
    <property type="component" value="Chromosome"/>
</dbReference>
<dbReference type="GO" id="GO:0005524">
    <property type="term" value="F:ATP binding"/>
    <property type="evidence" value="ECO:0007669"/>
    <property type="project" value="InterPro"/>
</dbReference>
<dbReference type="GO" id="GO:0043793">
    <property type="term" value="F:beta-ribofuranosylaminobenzene 5'-phosphate synthase activity"/>
    <property type="evidence" value="ECO:0007669"/>
    <property type="project" value="UniProtKB-EC"/>
</dbReference>
<dbReference type="Gene3D" id="3.30.230.10">
    <property type="match status" value="1"/>
</dbReference>
<dbReference type="InterPro" id="IPR053442">
    <property type="entry name" value="Beta-RFA-P_synthase"/>
</dbReference>
<dbReference type="InterPro" id="IPR013750">
    <property type="entry name" value="GHMP_kinase_C_dom"/>
</dbReference>
<dbReference type="InterPro" id="IPR006204">
    <property type="entry name" value="GHMP_kinase_N_dom"/>
</dbReference>
<dbReference type="InterPro" id="IPR004422">
    <property type="entry name" value="RFAP_synthase"/>
</dbReference>
<dbReference type="InterPro" id="IPR020568">
    <property type="entry name" value="Ribosomal_Su5_D2-typ_SF"/>
</dbReference>
<dbReference type="InterPro" id="IPR014721">
    <property type="entry name" value="Ribsml_uS5_D2-typ_fold_subgr"/>
</dbReference>
<dbReference type="NCBIfam" id="TIGR00144">
    <property type="entry name" value="beta_RFAP_syn"/>
    <property type="match status" value="1"/>
</dbReference>
<dbReference type="NCBIfam" id="NF040726">
    <property type="entry name" value="BetaRFA-P_synth"/>
    <property type="match status" value="1"/>
</dbReference>
<dbReference type="PANTHER" id="PTHR20861:SF6">
    <property type="entry name" value="BETA-RIBOFURANOSYLPHENOL 5'-PHOSPHATE SYNTHASE"/>
    <property type="match status" value="1"/>
</dbReference>
<dbReference type="PANTHER" id="PTHR20861">
    <property type="entry name" value="HOMOSERINE/4-DIPHOSPHOCYTIDYL-2-C-METHYL-D-ERYTHRITOL KINASE"/>
    <property type="match status" value="1"/>
</dbReference>
<dbReference type="Pfam" id="PF08544">
    <property type="entry name" value="GHMP_kinases_C"/>
    <property type="match status" value="1"/>
</dbReference>
<dbReference type="Pfam" id="PF00288">
    <property type="entry name" value="GHMP_kinases_N"/>
    <property type="match status" value="1"/>
</dbReference>
<dbReference type="PIRSF" id="PIRSF004884">
    <property type="entry name" value="Sugar_kin_arch"/>
    <property type="match status" value="1"/>
</dbReference>
<dbReference type="SUPFAM" id="SSF54211">
    <property type="entry name" value="Ribosomal protein S5 domain 2-like"/>
    <property type="match status" value="1"/>
</dbReference>
<accession>O28190</accession>
<proteinExistence type="evidence at protein level"/>
<reference key="1">
    <citation type="journal article" date="1997" name="Nature">
        <title>The complete genome sequence of the hyperthermophilic, sulphate-reducing archaeon Archaeoglobus fulgidus.</title>
        <authorList>
            <person name="Klenk H.-P."/>
            <person name="Clayton R.A."/>
            <person name="Tomb J.-F."/>
            <person name="White O."/>
            <person name="Nelson K.E."/>
            <person name="Ketchum K.A."/>
            <person name="Dodson R.J."/>
            <person name="Gwinn M.L."/>
            <person name="Hickey E.K."/>
            <person name="Peterson J.D."/>
            <person name="Richardson D.L."/>
            <person name="Kerlavage A.R."/>
            <person name="Graham D.E."/>
            <person name="Kyrpides N.C."/>
            <person name="Fleischmann R.D."/>
            <person name="Quackenbush J."/>
            <person name="Lee N.H."/>
            <person name="Sutton G.G."/>
            <person name="Gill S.R."/>
            <person name="Kirkness E.F."/>
            <person name="Dougherty B.A."/>
            <person name="McKenney K."/>
            <person name="Adams M.D."/>
            <person name="Loftus B.J."/>
            <person name="Peterson S.N."/>
            <person name="Reich C.I."/>
            <person name="McNeil L.K."/>
            <person name="Badger J.H."/>
            <person name="Glodek A."/>
            <person name="Zhou L."/>
            <person name="Overbeek R."/>
            <person name="Gocayne J.D."/>
            <person name="Weidman J.F."/>
            <person name="McDonald L.A."/>
            <person name="Utterback T.R."/>
            <person name="Cotton M.D."/>
            <person name="Spriggs T."/>
            <person name="Artiach P."/>
            <person name="Kaine B.P."/>
            <person name="Sykes S.M."/>
            <person name="Sadow P.W."/>
            <person name="D'Andrea K.P."/>
            <person name="Bowman C."/>
            <person name="Fujii C."/>
            <person name="Garland S.A."/>
            <person name="Mason T.M."/>
            <person name="Olsen G.J."/>
            <person name="Fraser C.M."/>
            <person name="Smith H.O."/>
            <person name="Woese C.R."/>
            <person name="Venter J.C."/>
        </authorList>
    </citation>
    <scope>NUCLEOTIDE SEQUENCE [LARGE SCALE GENOMIC DNA]</scope>
    <source>
        <strain>ATCC 49558 / DSM 4304 / JCM 9628 / NBRC 100126 / VC-16</strain>
    </source>
</reference>
<reference key="2">
    <citation type="journal article" date="2002" name="J. Bacteriol.">
        <title>Purification, overproduction, and partial characterization of beta-RFAP synthase, a key enzyme in the methanopterin biosynthesis pathway.</title>
        <authorList>
            <person name="Scott J.W."/>
            <person name="Rasche M.E."/>
        </authorList>
    </citation>
    <scope>FUNCTION</scope>
    <scope>CATALYTIC ACTIVITY</scope>
    <scope>BIOPHYSICOCHEMICAL PROPERTIES</scope>
    <scope>PATHWAY</scope>
    <scope>SUBUNIT</scope>
</reference>
<evidence type="ECO:0000250" key="1">
    <source>
        <dbReference type="UniProtKB" id="Q58822"/>
    </source>
</evidence>
<evidence type="ECO:0000269" key="2">
    <source>
    </source>
</evidence>
<evidence type="ECO:0000303" key="3">
    <source>
    </source>
</evidence>
<evidence type="ECO:0000305" key="4"/>
<evidence type="ECO:0000305" key="5">
    <source>
    </source>
</evidence>
<protein>
    <recommendedName>
        <fullName evidence="4">Beta-ribofuranosylphenol 5'-phosphate synthase</fullName>
        <ecNumber evidence="1">2.4.2.54</ecNumber>
    </recommendedName>
    <alternativeName>
        <fullName evidence="4">Beta-ribofuranosylaminobenzene 5'-phosphate synthase</fullName>
        <shortName evidence="3">Beta-RFA-P synthase</shortName>
    </alternativeName>
    <alternativeName>
        <fullName evidence="4">Beta-ribofuranosylhydroxybenzene 5'-phosphate synthase</fullName>
        <shortName evidence="4">Beta-RFH-P synthase</shortName>
    </alternativeName>
</protein>
<keyword id="KW-0328">Glycosyltransferase</keyword>
<keyword id="KW-1185">Reference proteome</keyword>
<keyword id="KW-0808">Transferase</keyword>
<sequence>MLRLRTPSRIHITLIDLNGSIGRVDGGVGLALEEPHIEIKAKESETFVLKGEPINRERFEIAAAKMAEYCGRGAEIEVVSDYDAHVGLGSGTQISLAVGRAFSELYGLNLTTRQIAEIMGRGGTSGIGVAVFDHGGLVVDGGHSTKEKKSFLPSSASRAKPAPMIARLDFPDWNVVLAIPDLKGFFGEREVNLFQKSCPVPLEDVREICHLILMKMLPAVVEADLDEFGKALKRIQELGFKKAEVEQYGELIKGCFDLADCIGMSSTGPTVYAITDSNAGGIERSLRDYFAEKGYECRTIVTKARNRGVEIEV</sequence>
<gene>
    <name type="ordered locus">AF_2089</name>
</gene>
<name>RFHPS_ARCFU</name>
<feature type="chain" id="PRO_0000107322" description="Beta-ribofuranosylphenol 5'-phosphate synthase">
    <location>
        <begin position="1"/>
        <end position="313"/>
    </location>
</feature>